<accession>Q5RFJ1</accession>
<accession>Q5RB97</accession>
<comment type="function">
    <text evidence="1">Chromatin-interacting protein that forms a stable heterodimer with interleukin enhancer-binding factor 3/ILF3 and plays a role in several biological processes including transcription, innate immunity or cell growth. Essential for the efficient reshuttling of ILF3 (isoform 1 and isoform 2) into the nucleus. Together with ILF3, forms an RNA-binding complex that is required for mitotic progression and cytokinesis by regulating the expression of a cluster of mitotic genes. Mechanistically, competes with STAU1/STAU2-mediated mRNA decay. Plays also a role in the inhibition of various viruses including Japanese encephalitis virus or enterovirus 71.</text>
</comment>
<comment type="subunit">
    <text evidence="1">Forms heterodimers with ILF3. ILF2-ILF3 heterodimers may also bind to PRKDC/XRCC7: this may stabilize the interaction of PRKDC/XRCC7 and the heterodimeric complex of G22P1/KU70 and XRCC5/KU80. Forms a complex with ILF3, YLPM1, KHDRBS1, RBMX, NCOA5 and PPP1CA. Identified in a IGF2BP1-dependent mRNP granule complex containing untranslated mRNAs. Interacts with IGF2BP1. Interacts with CRBN; this interaction promotes ubiquitination and subsequent degradation of ILF2.</text>
</comment>
<comment type="subcellular location">
    <subcellularLocation>
        <location evidence="1">Nucleus</location>
        <location evidence="1">Nucleolus</location>
    </subcellularLocation>
    <subcellularLocation>
        <location evidence="1">Cytoplasm</location>
    </subcellularLocation>
    <subcellularLocation>
        <location evidence="1">Nucleus</location>
    </subcellularLocation>
    <text evidence="1">Localized in cytoplasmic mRNP granules containing untranslated mRNAs.</text>
</comment>
<comment type="alternative products">
    <event type="alternative splicing"/>
    <isoform>
        <id>Q5RFJ1-1</id>
        <name>1</name>
        <sequence type="displayed"/>
    </isoform>
    <isoform>
        <id>Q5RFJ1-2</id>
        <name>2</name>
        <sequence type="described" ref="VSP_013410"/>
    </isoform>
</comment>
<comment type="PTM">
    <text evidence="1">Ubiquitinated at Lys-45 by CRBN with polyubiquitin chains by the CUL4-RING E3 ligase (CRL4-CRBN) and then degraded by the proteasome.</text>
</comment>
<name>ILF2_PONAB</name>
<keyword id="KW-0010">Activator</keyword>
<keyword id="KW-0025">Alternative splicing</keyword>
<keyword id="KW-0963">Cytoplasm</keyword>
<keyword id="KW-0238">DNA-binding</keyword>
<keyword id="KW-1017">Isopeptide bond</keyword>
<keyword id="KW-0488">Methylation</keyword>
<keyword id="KW-0539">Nucleus</keyword>
<keyword id="KW-0597">Phosphoprotein</keyword>
<keyword id="KW-1185">Reference proteome</keyword>
<keyword id="KW-0804">Transcription</keyword>
<keyword id="KW-0805">Transcription regulation</keyword>
<keyword id="KW-0832">Ubl conjugation</keyword>
<feature type="chain" id="PRO_0000126065" description="Interleukin enhancer-binding factor 2">
    <location>
        <begin position="1"/>
        <end position="390"/>
    </location>
</feature>
<feature type="domain" description="DZF" evidence="3">
    <location>
        <begin position="24"/>
        <end position="371"/>
    </location>
</feature>
<feature type="region of interest" description="Disordered" evidence="4">
    <location>
        <begin position="1"/>
        <end position="20"/>
    </location>
</feature>
<feature type="region of interest" description="Disordered" evidence="4">
    <location>
        <begin position="351"/>
        <end position="390"/>
    </location>
</feature>
<feature type="compositionally biased region" description="Gly residues" evidence="4">
    <location>
        <begin position="11"/>
        <end position="20"/>
    </location>
</feature>
<feature type="compositionally biased region" description="Basic and acidic residues" evidence="4">
    <location>
        <begin position="356"/>
        <end position="367"/>
    </location>
</feature>
<feature type="compositionally biased region" description="Acidic residues" evidence="4">
    <location>
        <begin position="368"/>
        <end position="390"/>
    </location>
</feature>
<feature type="modified residue" description="Asymmetric dimethylarginine; alternate" evidence="2">
    <location>
        <position position="16"/>
    </location>
</feature>
<feature type="modified residue" description="Omega-N-methylarginine; alternate" evidence="1">
    <location>
        <position position="16"/>
    </location>
</feature>
<feature type="modified residue" description="Omega-N-methylarginine" evidence="1">
    <location>
        <position position="24"/>
    </location>
</feature>
<feature type="modified residue" description="Phosphoserine" evidence="1">
    <location>
        <position position="52"/>
    </location>
</feature>
<feature type="modified residue" description="Phosphoserine" evidence="1">
    <location>
        <position position="68"/>
    </location>
</feature>
<feature type="modified residue" description="Phosphothreonine" evidence="1">
    <location>
        <position position="388"/>
    </location>
</feature>
<feature type="cross-link" description="Glycyl lysine isopeptide (Lys-Gly) (interchain with G-Cter in ubiquitin)" evidence="1">
    <location>
        <position position="45"/>
    </location>
</feature>
<feature type="cross-link" description="Glycyl lysine isopeptide (Lys-Gly) (interchain with G-Cter in SUMO2)" evidence="1">
    <location>
        <position position="186"/>
    </location>
</feature>
<feature type="cross-link" description="Glycyl lysine isopeptide (Lys-Gly) (interchain with G-Cter in SUMO2)" evidence="1">
    <location>
        <position position="364"/>
    </location>
</feature>
<feature type="splice variant" id="VSP_013410" description="In isoform 2." evidence="5">
    <location>
        <begin position="1"/>
        <end position="38"/>
    </location>
</feature>
<sequence length="390" mass="43062">MRGDRGRGRGGRFGSRGGPGGGFRPFVPHIPFDFYLCEMAFPRVKPAPDETSFSEALLKRNQDLAPNSAEQASILSLVTKINNVIDNLIVAPGTFEVQIEEVRQVGSYKKGTMTTGHNVADLVVILKILPTLEAVAALGNKVVESLRAQDPSEVLTMLTNETGFEISSSDATVKILITTVPPNLRKLDPELHLDIKVLQSALAAIRHARWFEENASQSTVKVLIRLLKDLRIRFPGFEPLTPWILDLLGHYAVMNNPTRQPLALNVAYRRCLQILAAGLFLPGSVGITDPCESGNFRVHTVMTLEQQDMVCYTAQTLVRILSHGGFRKILGQEGDASYLASEISTWDGVIVTPSEKAYEKPPEKKEGEEEEENTEEPPQGEEEESMETQE</sequence>
<organism>
    <name type="scientific">Pongo abelii</name>
    <name type="common">Sumatran orangutan</name>
    <name type="synonym">Pongo pygmaeus abelii</name>
    <dbReference type="NCBI Taxonomy" id="9601"/>
    <lineage>
        <taxon>Eukaryota</taxon>
        <taxon>Metazoa</taxon>
        <taxon>Chordata</taxon>
        <taxon>Craniata</taxon>
        <taxon>Vertebrata</taxon>
        <taxon>Euteleostomi</taxon>
        <taxon>Mammalia</taxon>
        <taxon>Eutheria</taxon>
        <taxon>Euarchontoglires</taxon>
        <taxon>Primates</taxon>
        <taxon>Haplorrhini</taxon>
        <taxon>Catarrhini</taxon>
        <taxon>Hominidae</taxon>
        <taxon>Pongo</taxon>
    </lineage>
</organism>
<protein>
    <recommendedName>
        <fullName>Interleukin enhancer-binding factor 2</fullName>
    </recommendedName>
</protein>
<proteinExistence type="evidence at transcript level"/>
<evidence type="ECO:0000250" key="1">
    <source>
        <dbReference type="UniProtKB" id="Q12905"/>
    </source>
</evidence>
<evidence type="ECO:0000250" key="2">
    <source>
        <dbReference type="UniProtKB" id="Q9CXY6"/>
    </source>
</evidence>
<evidence type="ECO:0000255" key="3">
    <source>
        <dbReference type="PROSITE-ProRule" id="PRU01040"/>
    </source>
</evidence>
<evidence type="ECO:0000256" key="4">
    <source>
        <dbReference type="SAM" id="MobiDB-lite"/>
    </source>
</evidence>
<evidence type="ECO:0000303" key="5">
    <source ref="1"/>
</evidence>
<gene>
    <name type="primary">ILF2</name>
</gene>
<reference key="1">
    <citation type="submission" date="2004-11" db="EMBL/GenBank/DDBJ databases">
        <authorList>
            <consortium name="The German cDNA consortium"/>
        </authorList>
    </citation>
    <scope>NUCLEOTIDE SEQUENCE [LARGE SCALE MRNA] (ISOFORMS 1 AND 2)</scope>
    <source>
        <tissue>Kidney</tissue>
    </source>
</reference>
<dbReference type="EMBL" id="CR857165">
    <property type="protein sequence ID" value="CAH89466.1"/>
    <property type="molecule type" value="mRNA"/>
</dbReference>
<dbReference type="EMBL" id="CR858754">
    <property type="protein sequence ID" value="CAH90963.1"/>
    <property type="molecule type" value="mRNA"/>
</dbReference>
<dbReference type="RefSeq" id="NP_001125555.1">
    <molecule id="Q5RFJ1-2"/>
    <property type="nucleotide sequence ID" value="NM_001132083.1"/>
</dbReference>
<dbReference type="RefSeq" id="NP_001128737.1">
    <molecule id="Q5RFJ1-1"/>
    <property type="nucleotide sequence ID" value="NM_001135265.2"/>
</dbReference>
<dbReference type="RefSeq" id="XP_009242123.1">
    <property type="nucleotide sequence ID" value="XM_009243848.1"/>
</dbReference>
<dbReference type="SMR" id="Q5RFJ1"/>
<dbReference type="FunCoup" id="Q5RFJ1">
    <property type="interactions" value="2556"/>
</dbReference>
<dbReference type="STRING" id="9601.ENSPPYP00000000934"/>
<dbReference type="Ensembl" id="ENSPPYT00000000967.3">
    <molecule id="Q5RFJ1-1"/>
    <property type="protein sequence ID" value="ENSPPYP00000000934.2"/>
    <property type="gene ID" value="ENSPPYG00000000800.3"/>
</dbReference>
<dbReference type="GeneID" id="100172468"/>
<dbReference type="KEGG" id="pon:100172468"/>
<dbReference type="CTD" id="3608"/>
<dbReference type="eggNOG" id="KOG3793">
    <property type="taxonomic scope" value="Eukaryota"/>
</dbReference>
<dbReference type="GeneTree" id="ENSGT00940000154879"/>
<dbReference type="HOGENOM" id="CLU_064863_1_0_1"/>
<dbReference type="InParanoid" id="Q5RFJ1"/>
<dbReference type="OMA" id="YLAIEMS"/>
<dbReference type="OrthoDB" id="5775647at2759"/>
<dbReference type="TreeFam" id="TF320194"/>
<dbReference type="Proteomes" id="UP000001595">
    <property type="component" value="Chromosome 1"/>
</dbReference>
<dbReference type="GO" id="GO:0071013">
    <property type="term" value="C:catalytic step 2 spliceosome"/>
    <property type="evidence" value="ECO:0007669"/>
    <property type="project" value="TreeGrafter"/>
</dbReference>
<dbReference type="GO" id="GO:0005829">
    <property type="term" value="C:cytosol"/>
    <property type="evidence" value="ECO:0007669"/>
    <property type="project" value="Ensembl"/>
</dbReference>
<dbReference type="GO" id="GO:0005730">
    <property type="term" value="C:nucleolus"/>
    <property type="evidence" value="ECO:0000250"/>
    <property type="project" value="UniProtKB"/>
</dbReference>
<dbReference type="GO" id="GO:0005654">
    <property type="term" value="C:nucleoplasm"/>
    <property type="evidence" value="ECO:0007669"/>
    <property type="project" value="Ensembl"/>
</dbReference>
<dbReference type="GO" id="GO:0005634">
    <property type="term" value="C:nucleus"/>
    <property type="evidence" value="ECO:0000250"/>
    <property type="project" value="UniProtKB"/>
</dbReference>
<dbReference type="GO" id="GO:1990904">
    <property type="term" value="C:ribonucleoprotein complex"/>
    <property type="evidence" value="ECO:0000250"/>
    <property type="project" value="UniProtKB"/>
</dbReference>
<dbReference type="GO" id="GO:0003677">
    <property type="term" value="F:DNA binding"/>
    <property type="evidence" value="ECO:0000250"/>
    <property type="project" value="UniProtKB"/>
</dbReference>
<dbReference type="GO" id="GO:0003725">
    <property type="term" value="F:double-stranded RNA binding"/>
    <property type="evidence" value="ECO:0000250"/>
    <property type="project" value="UniProtKB"/>
</dbReference>
<dbReference type="GO" id="GO:0045893">
    <property type="term" value="P:positive regulation of DNA-templated transcription"/>
    <property type="evidence" value="ECO:0000250"/>
    <property type="project" value="UniProtKB"/>
</dbReference>
<dbReference type="FunFam" id="1.10.1410.40:FF:000004">
    <property type="entry name" value="Interleukin enhancer-binding factor 2"/>
    <property type="match status" value="1"/>
</dbReference>
<dbReference type="FunFam" id="1.10.1410.40:FF:000010">
    <property type="entry name" value="Interleukin enhancer-binding factor 2"/>
    <property type="match status" value="1"/>
</dbReference>
<dbReference type="FunFam" id="3.30.460.10:FF:000093">
    <property type="entry name" value="Interleukin enhancer-binding factor 2"/>
    <property type="match status" value="1"/>
</dbReference>
<dbReference type="Gene3D" id="1.10.1410.40">
    <property type="match status" value="1"/>
</dbReference>
<dbReference type="Gene3D" id="3.30.460.10">
    <property type="entry name" value="Beta Polymerase, domain 2"/>
    <property type="match status" value="1"/>
</dbReference>
<dbReference type="InterPro" id="IPR006561">
    <property type="entry name" value="DZF_dom"/>
</dbReference>
<dbReference type="InterPro" id="IPR049402">
    <property type="entry name" value="DZF_dom_C"/>
</dbReference>
<dbReference type="InterPro" id="IPR049401">
    <property type="entry name" value="DZF_dom_N"/>
</dbReference>
<dbReference type="InterPro" id="IPR052134">
    <property type="entry name" value="ILF2"/>
</dbReference>
<dbReference type="InterPro" id="IPR043519">
    <property type="entry name" value="NT_sf"/>
</dbReference>
<dbReference type="PANTHER" id="PTHR46447">
    <property type="entry name" value="INTERLEUKIN ENHANCER-BINDING FACTOR"/>
    <property type="match status" value="1"/>
</dbReference>
<dbReference type="PANTHER" id="PTHR46447:SF1">
    <property type="entry name" value="INTERLEUKIN ENHANCER-BINDING FACTOR 2"/>
    <property type="match status" value="1"/>
</dbReference>
<dbReference type="Pfam" id="PF20965">
    <property type="entry name" value="DZF_C"/>
    <property type="match status" value="1"/>
</dbReference>
<dbReference type="Pfam" id="PF07528">
    <property type="entry name" value="DZF_N"/>
    <property type="match status" value="1"/>
</dbReference>
<dbReference type="SMART" id="SM00572">
    <property type="entry name" value="DZF"/>
    <property type="match status" value="1"/>
</dbReference>
<dbReference type="SUPFAM" id="SSF81301">
    <property type="entry name" value="Nucleotidyltransferase"/>
    <property type="match status" value="1"/>
</dbReference>
<dbReference type="PROSITE" id="PS51703">
    <property type="entry name" value="DZF"/>
    <property type="match status" value="1"/>
</dbReference>